<evidence type="ECO:0000255" key="1">
    <source>
        <dbReference type="HAMAP-Rule" id="MF_01248"/>
    </source>
</evidence>
<evidence type="ECO:0000256" key="2">
    <source>
        <dbReference type="SAM" id="MobiDB-lite"/>
    </source>
</evidence>
<proteinExistence type="inferred from homology"/>
<comment type="function">
    <text evidence="1">Removes maltotriose and maltotetraose chains that are attached by 1,6-alpha-linkage to the limit dextrin main chain, generating a debranched limit dextrin.</text>
</comment>
<comment type="catalytic activity">
    <reaction evidence="1">
        <text>Hydrolysis of (1-&gt;6)-alpha-D-glucosidic linkages to branches with degrees of polymerization of three or four glucose residues in limit dextrin.</text>
        <dbReference type="EC" id="3.2.1.196"/>
    </reaction>
</comment>
<comment type="pathway">
    <text evidence="1">Glycan degradation; glycogen degradation.</text>
</comment>
<comment type="similarity">
    <text evidence="1">Belongs to the glycosyl hydrolase 13 family.</text>
</comment>
<feature type="chain" id="PRO_1000067099" description="Glycogen debranching enzyme">
    <location>
        <begin position="1"/>
        <end position="657"/>
    </location>
</feature>
<feature type="region of interest" description="Disordered" evidence="2">
    <location>
        <begin position="460"/>
        <end position="479"/>
    </location>
</feature>
<feature type="active site" description="Nucleophile" evidence="1">
    <location>
        <position position="336"/>
    </location>
</feature>
<feature type="active site" description="Proton donor" evidence="1">
    <location>
        <position position="371"/>
    </location>
</feature>
<feature type="site" description="Transition state stabilizer" evidence="1">
    <location>
        <position position="443"/>
    </location>
</feature>
<name>GLGX_ECOHS</name>
<keyword id="KW-0119">Carbohydrate metabolism</keyword>
<keyword id="KW-0321">Glycogen metabolism</keyword>
<keyword id="KW-0326">Glycosidase</keyword>
<keyword id="KW-0378">Hydrolase</keyword>
<accession>A8A5P1</accession>
<protein>
    <recommendedName>
        <fullName evidence="1">Glycogen debranching enzyme</fullName>
        <ecNumber evidence="1">3.2.1.196</ecNumber>
    </recommendedName>
    <alternativeName>
        <fullName evidence="1">Limit dextrin alpha-1,6-maltotetraose-hydrolase</fullName>
    </alternativeName>
</protein>
<dbReference type="EC" id="3.2.1.196" evidence="1"/>
<dbReference type="EMBL" id="CP000802">
    <property type="protein sequence ID" value="ABV07845.1"/>
    <property type="molecule type" value="Genomic_DNA"/>
</dbReference>
<dbReference type="RefSeq" id="WP_000192559.1">
    <property type="nucleotide sequence ID" value="NC_009800.1"/>
</dbReference>
<dbReference type="SMR" id="A8A5P1"/>
<dbReference type="CAZy" id="CBM48">
    <property type="family name" value="Carbohydrate-Binding Module Family 48"/>
</dbReference>
<dbReference type="CAZy" id="GH13">
    <property type="family name" value="Glycoside Hydrolase Family 13"/>
</dbReference>
<dbReference type="KEGG" id="ecx:EcHS_A3631"/>
<dbReference type="HOGENOM" id="CLU_011725_1_1_6"/>
<dbReference type="UniPathway" id="UPA00165"/>
<dbReference type="GO" id="GO:0004133">
    <property type="term" value="F:glycogen debranching enzyme activity"/>
    <property type="evidence" value="ECO:0007669"/>
    <property type="project" value="UniProtKB-UniRule"/>
</dbReference>
<dbReference type="GO" id="GO:0004553">
    <property type="term" value="F:hydrolase activity, hydrolyzing O-glycosyl compounds"/>
    <property type="evidence" value="ECO:0007669"/>
    <property type="project" value="InterPro"/>
</dbReference>
<dbReference type="GO" id="GO:0005980">
    <property type="term" value="P:glycogen catabolic process"/>
    <property type="evidence" value="ECO:0007669"/>
    <property type="project" value="UniProtKB-UniRule"/>
</dbReference>
<dbReference type="CDD" id="cd11326">
    <property type="entry name" value="AmyAc_Glg_debranch"/>
    <property type="match status" value="1"/>
</dbReference>
<dbReference type="CDD" id="cd02856">
    <property type="entry name" value="E_set_GDE_Isoamylase_N"/>
    <property type="match status" value="1"/>
</dbReference>
<dbReference type="FunFam" id="2.60.40.10:FF:000468">
    <property type="entry name" value="Glycogen debranching enzyme"/>
    <property type="match status" value="1"/>
</dbReference>
<dbReference type="FunFam" id="3.20.20.80:FF:000031">
    <property type="entry name" value="Glycogen debranching enzyme"/>
    <property type="match status" value="1"/>
</dbReference>
<dbReference type="Gene3D" id="3.20.20.80">
    <property type="entry name" value="Glycosidases"/>
    <property type="match status" value="1"/>
</dbReference>
<dbReference type="Gene3D" id="2.60.40.1180">
    <property type="entry name" value="Golgi alpha-mannosidase II"/>
    <property type="match status" value="1"/>
</dbReference>
<dbReference type="Gene3D" id="2.60.40.10">
    <property type="entry name" value="Immunoglobulins"/>
    <property type="match status" value="1"/>
</dbReference>
<dbReference type="HAMAP" id="MF_01248">
    <property type="entry name" value="GlgX"/>
    <property type="match status" value="1"/>
</dbReference>
<dbReference type="InterPro" id="IPR040784">
    <property type="entry name" value="GlgX_C"/>
</dbReference>
<dbReference type="InterPro" id="IPR044505">
    <property type="entry name" value="GlgX_Isoamylase_N_E_set"/>
</dbReference>
<dbReference type="InterPro" id="IPR006047">
    <property type="entry name" value="Glyco_hydro_13_cat_dom"/>
</dbReference>
<dbReference type="InterPro" id="IPR004193">
    <property type="entry name" value="Glyco_hydro_13_N"/>
</dbReference>
<dbReference type="InterPro" id="IPR013780">
    <property type="entry name" value="Glyco_hydro_b"/>
</dbReference>
<dbReference type="InterPro" id="IPR022844">
    <property type="entry name" value="Glycogen_debranch_bac"/>
</dbReference>
<dbReference type="InterPro" id="IPR011837">
    <property type="entry name" value="Glycogen_debranch_GlgX"/>
</dbReference>
<dbReference type="InterPro" id="IPR017853">
    <property type="entry name" value="Glycoside_hydrolase_SF"/>
</dbReference>
<dbReference type="InterPro" id="IPR013783">
    <property type="entry name" value="Ig-like_fold"/>
</dbReference>
<dbReference type="InterPro" id="IPR014756">
    <property type="entry name" value="Ig_E-set"/>
</dbReference>
<dbReference type="NCBIfam" id="TIGR02100">
    <property type="entry name" value="glgX_debranch"/>
    <property type="match status" value="1"/>
</dbReference>
<dbReference type="NCBIfam" id="NF002983">
    <property type="entry name" value="PRK03705.1"/>
    <property type="match status" value="1"/>
</dbReference>
<dbReference type="PANTHER" id="PTHR43002">
    <property type="entry name" value="GLYCOGEN DEBRANCHING ENZYME"/>
    <property type="match status" value="1"/>
</dbReference>
<dbReference type="Pfam" id="PF00128">
    <property type="entry name" value="Alpha-amylase"/>
    <property type="match status" value="1"/>
</dbReference>
<dbReference type="Pfam" id="PF02922">
    <property type="entry name" value="CBM_48"/>
    <property type="match status" value="1"/>
</dbReference>
<dbReference type="Pfam" id="PF18390">
    <property type="entry name" value="GlgX_C"/>
    <property type="match status" value="1"/>
</dbReference>
<dbReference type="SMART" id="SM00642">
    <property type="entry name" value="Aamy"/>
    <property type="match status" value="1"/>
</dbReference>
<dbReference type="SUPFAM" id="SSF51445">
    <property type="entry name" value="(Trans)glycosidases"/>
    <property type="match status" value="1"/>
</dbReference>
<dbReference type="SUPFAM" id="SSF81296">
    <property type="entry name" value="E set domains"/>
    <property type="match status" value="1"/>
</dbReference>
<gene>
    <name evidence="1" type="primary">glgX</name>
    <name type="ordered locus">EcHS_A3631</name>
</gene>
<sequence length="657" mass="73619">MTQLAIGKPAPLGAHYDGQGVNFTLFSVHAERVELCVFDANGQEHRYDLPGHSGDIWHGYLPDARPGLRYGYRVHGPWQPAEGHRFNPAKLLIDPCARQIDGEFKDNPLLHAGHNEPDYRDNAAIAPKCVVVVDHYDWEDDAPPRTPWGSTIIYEAHVKGLTYLHPEIPVEIRGTYKALGHPVMINYLKQLGITALELLPVAQFASEPRLQRMGLSNYWGYNPVAMFALHPAYACSPETALDEFRDAIKALHKAGIEVILDIVLNHSAELDLDGPLFSLRGIDNRSYYWIREDGDYHNWTGCGNTLNLSHPAVVDYASACLRYWVETCHVDGFRFDLAAVMGRTPEFRQDAPLFTAIQNCPVLSQVKLIAEPWDIAPGGYQVGNFPPLFAEWNDHFRDAARRFWLHYDLPLGAFAGRFAASSDVFKRNGRLPSAAINLVTAHDGFTLRDCVCFNHKHNEANGEENRDGTNNNYSNNHGKEGLGGTLDLVERRRDSIHALLTTLLLSQGTPMLLAGDEHGHSQHGNNNAYCQDNQLTWLDWSQASSGLTAFTAALIHLRKRIPALVENRWWEEGDGNVRWLNRYAQPLSTDEWQNGPKQLQILLSDRFLIAINATLEVTEIVLPAGEWHAIPPFAGEDNPVITAVWQGPAHGLCVFQR</sequence>
<reference key="1">
    <citation type="journal article" date="2008" name="J. Bacteriol.">
        <title>The pangenome structure of Escherichia coli: comparative genomic analysis of E. coli commensal and pathogenic isolates.</title>
        <authorList>
            <person name="Rasko D.A."/>
            <person name="Rosovitz M.J."/>
            <person name="Myers G.S.A."/>
            <person name="Mongodin E.F."/>
            <person name="Fricke W.F."/>
            <person name="Gajer P."/>
            <person name="Crabtree J."/>
            <person name="Sebaihia M."/>
            <person name="Thomson N.R."/>
            <person name="Chaudhuri R."/>
            <person name="Henderson I.R."/>
            <person name="Sperandio V."/>
            <person name="Ravel J."/>
        </authorList>
    </citation>
    <scope>NUCLEOTIDE SEQUENCE [LARGE SCALE GENOMIC DNA]</scope>
    <source>
        <strain>HS</strain>
    </source>
</reference>
<organism>
    <name type="scientific">Escherichia coli O9:H4 (strain HS)</name>
    <dbReference type="NCBI Taxonomy" id="331112"/>
    <lineage>
        <taxon>Bacteria</taxon>
        <taxon>Pseudomonadati</taxon>
        <taxon>Pseudomonadota</taxon>
        <taxon>Gammaproteobacteria</taxon>
        <taxon>Enterobacterales</taxon>
        <taxon>Enterobacteriaceae</taxon>
        <taxon>Escherichia</taxon>
    </lineage>
</organism>